<protein>
    <recommendedName>
        <fullName evidence="1">tRNA dimethylallyltransferase</fullName>
        <ecNumber evidence="1">2.5.1.75</ecNumber>
    </recommendedName>
    <alternativeName>
        <fullName evidence="1">Dimethylallyl diphosphate:tRNA dimethylallyltransferase</fullName>
        <shortName evidence="1">DMAPP:tRNA dimethylallyltransferase</shortName>
        <shortName evidence="1">DMATase</shortName>
    </alternativeName>
    <alternativeName>
        <fullName evidence="1">Isopentenyl-diphosphate:tRNA isopentenyltransferase</fullName>
        <shortName evidence="1">IPP transferase</shortName>
        <shortName evidence="1">IPPT</shortName>
        <shortName evidence="1">IPTase</shortName>
    </alternativeName>
</protein>
<accession>Q4FT85</accession>
<feature type="chain" id="PRO_0000377273" description="tRNA dimethylallyltransferase">
    <location>
        <begin position="1"/>
        <end position="414"/>
    </location>
</feature>
<feature type="region of interest" description="Interaction with substrate tRNA" evidence="1">
    <location>
        <begin position="58"/>
        <end position="61"/>
    </location>
</feature>
<feature type="region of interest" description="Interaction with substrate tRNA" evidence="1">
    <location>
        <begin position="182"/>
        <end position="186"/>
    </location>
</feature>
<feature type="region of interest" description="Interaction with substrate tRNA" evidence="1">
    <location>
        <begin position="266"/>
        <end position="271"/>
    </location>
</feature>
<feature type="binding site" evidence="1">
    <location>
        <begin position="33"/>
        <end position="40"/>
    </location>
    <ligand>
        <name>ATP</name>
        <dbReference type="ChEBI" id="CHEBI:30616"/>
    </ligand>
</feature>
<feature type="binding site" evidence="1">
    <location>
        <begin position="35"/>
        <end position="40"/>
    </location>
    <ligand>
        <name>substrate</name>
    </ligand>
</feature>
<feature type="site" description="Interaction with substrate tRNA" evidence="1">
    <location>
        <position position="124"/>
    </location>
</feature>
<feature type="site" description="Interaction with substrate tRNA" evidence="1">
    <location>
        <position position="146"/>
    </location>
</feature>
<reference key="1">
    <citation type="journal article" date="2010" name="Appl. Environ. Microbiol.">
        <title>The genome sequence of Psychrobacter arcticus 273-4, a psychroactive Siberian permafrost bacterium, reveals mechanisms for adaptation to low-temperature growth.</title>
        <authorList>
            <person name="Ayala-del-Rio H.L."/>
            <person name="Chain P.S."/>
            <person name="Grzymski J.J."/>
            <person name="Ponder M.A."/>
            <person name="Ivanova N."/>
            <person name="Bergholz P.W."/>
            <person name="Di Bartolo G."/>
            <person name="Hauser L."/>
            <person name="Land M."/>
            <person name="Bakermans C."/>
            <person name="Rodrigues D."/>
            <person name="Klappenbach J."/>
            <person name="Zarka D."/>
            <person name="Larimer F."/>
            <person name="Richardson P."/>
            <person name="Murray A."/>
            <person name="Thomashow M."/>
            <person name="Tiedje J.M."/>
        </authorList>
    </citation>
    <scope>NUCLEOTIDE SEQUENCE [LARGE SCALE GENOMIC DNA]</scope>
    <source>
        <strain>DSM 17307 / VKM B-2377 / 273-4</strain>
    </source>
</reference>
<comment type="function">
    <text evidence="1">Catalyzes the transfer of a dimethylallyl group onto the adenine at position 37 in tRNAs that read codons beginning with uridine, leading to the formation of N6-(dimethylallyl)adenosine (i(6)A).</text>
</comment>
<comment type="catalytic activity">
    <reaction evidence="1">
        <text>adenosine(37) in tRNA + dimethylallyl diphosphate = N(6)-dimethylallyladenosine(37) in tRNA + diphosphate</text>
        <dbReference type="Rhea" id="RHEA:26482"/>
        <dbReference type="Rhea" id="RHEA-COMP:10162"/>
        <dbReference type="Rhea" id="RHEA-COMP:10375"/>
        <dbReference type="ChEBI" id="CHEBI:33019"/>
        <dbReference type="ChEBI" id="CHEBI:57623"/>
        <dbReference type="ChEBI" id="CHEBI:74411"/>
        <dbReference type="ChEBI" id="CHEBI:74415"/>
        <dbReference type="EC" id="2.5.1.75"/>
    </reaction>
</comment>
<comment type="cofactor">
    <cofactor evidence="1">
        <name>Mg(2+)</name>
        <dbReference type="ChEBI" id="CHEBI:18420"/>
    </cofactor>
</comment>
<comment type="subunit">
    <text evidence="1">Monomer.</text>
</comment>
<comment type="similarity">
    <text evidence="1">Belongs to the IPP transferase family.</text>
</comment>
<comment type="sequence caution" evidence="2">
    <conflict type="erroneous initiation">
        <sequence resource="EMBL-CDS" id="AAZ18773"/>
    </conflict>
</comment>
<evidence type="ECO:0000255" key="1">
    <source>
        <dbReference type="HAMAP-Rule" id="MF_00185"/>
    </source>
</evidence>
<evidence type="ECO:0000305" key="2"/>
<gene>
    <name evidence="1" type="primary">miaA</name>
    <name type="ordered locus">Psyc_0920</name>
</gene>
<name>MIAA_PSYA2</name>
<sequence>MTIKGNRMRLSSDSLSHHLSPSLADNSVVCLMAPTASGKTNLAYELYDSGRYELISVDSALVYRDMTVGTAKPNAAELARYPHHLVDIIDPMQSYSVAEFVSDVARLIDSCHQNGKIPLLVGGTMMYYMALLDGLSPVPVSDDSVRARVEQWRQDEGISALYDYLGKVDAISHERLNATDTQRITRAVEVYLQTNIPISDWQRQPKQALAHNPNQQWHALAVMPDRPWLHTRIEQRLDIMWREGLVEEVISLLERYPLTPSLPSMRCVGYRQVLEYLVQINHPVFEQSHLDKAQFYDAFAQSNLSSVESNEQDATTQSGMTQTHLSVATDQTEALACQQMQNKALYATRQLAKRQYTWLRKVMQLSDTAAEQATVSSAAPSTSIIGFDDMTASQNDKLILHSFITMEQARAYLC</sequence>
<keyword id="KW-0067">ATP-binding</keyword>
<keyword id="KW-0460">Magnesium</keyword>
<keyword id="KW-0547">Nucleotide-binding</keyword>
<keyword id="KW-1185">Reference proteome</keyword>
<keyword id="KW-0808">Transferase</keyword>
<keyword id="KW-0819">tRNA processing</keyword>
<proteinExistence type="inferred from homology"/>
<organism>
    <name type="scientific">Psychrobacter arcticus (strain DSM 17307 / VKM B-2377 / 273-4)</name>
    <dbReference type="NCBI Taxonomy" id="259536"/>
    <lineage>
        <taxon>Bacteria</taxon>
        <taxon>Pseudomonadati</taxon>
        <taxon>Pseudomonadota</taxon>
        <taxon>Gammaproteobacteria</taxon>
        <taxon>Moraxellales</taxon>
        <taxon>Moraxellaceae</taxon>
        <taxon>Psychrobacter</taxon>
    </lineage>
</organism>
<dbReference type="EC" id="2.5.1.75" evidence="1"/>
<dbReference type="EMBL" id="CP000082">
    <property type="protein sequence ID" value="AAZ18773.1"/>
    <property type="status" value="ALT_INIT"/>
    <property type="molecule type" value="Genomic_DNA"/>
</dbReference>
<dbReference type="SMR" id="Q4FT85"/>
<dbReference type="STRING" id="259536.Psyc_0920"/>
<dbReference type="KEGG" id="par:Psyc_0920"/>
<dbReference type="eggNOG" id="COG0324">
    <property type="taxonomic scope" value="Bacteria"/>
</dbReference>
<dbReference type="HOGENOM" id="CLU_032616_1_0_6"/>
<dbReference type="OrthoDB" id="9776390at2"/>
<dbReference type="Proteomes" id="UP000000546">
    <property type="component" value="Chromosome"/>
</dbReference>
<dbReference type="GO" id="GO:0005524">
    <property type="term" value="F:ATP binding"/>
    <property type="evidence" value="ECO:0007669"/>
    <property type="project" value="UniProtKB-UniRule"/>
</dbReference>
<dbReference type="GO" id="GO:0052381">
    <property type="term" value="F:tRNA dimethylallyltransferase activity"/>
    <property type="evidence" value="ECO:0007669"/>
    <property type="project" value="UniProtKB-UniRule"/>
</dbReference>
<dbReference type="GO" id="GO:0006400">
    <property type="term" value="P:tRNA modification"/>
    <property type="evidence" value="ECO:0007669"/>
    <property type="project" value="TreeGrafter"/>
</dbReference>
<dbReference type="Gene3D" id="1.10.20.140">
    <property type="match status" value="1"/>
</dbReference>
<dbReference type="Gene3D" id="3.40.50.300">
    <property type="entry name" value="P-loop containing nucleotide triphosphate hydrolases"/>
    <property type="match status" value="1"/>
</dbReference>
<dbReference type="HAMAP" id="MF_00185">
    <property type="entry name" value="IPP_trans"/>
    <property type="match status" value="1"/>
</dbReference>
<dbReference type="InterPro" id="IPR039657">
    <property type="entry name" value="Dimethylallyltransferase"/>
</dbReference>
<dbReference type="InterPro" id="IPR018022">
    <property type="entry name" value="IPT"/>
</dbReference>
<dbReference type="InterPro" id="IPR027417">
    <property type="entry name" value="P-loop_NTPase"/>
</dbReference>
<dbReference type="NCBIfam" id="TIGR00174">
    <property type="entry name" value="miaA"/>
    <property type="match status" value="1"/>
</dbReference>
<dbReference type="PANTHER" id="PTHR11088">
    <property type="entry name" value="TRNA DIMETHYLALLYLTRANSFERASE"/>
    <property type="match status" value="1"/>
</dbReference>
<dbReference type="PANTHER" id="PTHR11088:SF60">
    <property type="entry name" value="TRNA DIMETHYLALLYLTRANSFERASE"/>
    <property type="match status" value="1"/>
</dbReference>
<dbReference type="Pfam" id="PF01715">
    <property type="entry name" value="IPPT"/>
    <property type="match status" value="1"/>
</dbReference>
<dbReference type="SUPFAM" id="SSF52540">
    <property type="entry name" value="P-loop containing nucleoside triphosphate hydrolases"/>
    <property type="match status" value="1"/>
</dbReference>